<reference key="1">
    <citation type="journal article" date="2007" name="PLoS Genet.">
        <title>Patterns and implications of gene gain and loss in the evolution of Prochlorococcus.</title>
        <authorList>
            <person name="Kettler G.C."/>
            <person name="Martiny A.C."/>
            <person name="Huang K."/>
            <person name="Zucker J."/>
            <person name="Coleman M.L."/>
            <person name="Rodrigue S."/>
            <person name="Chen F."/>
            <person name="Lapidus A."/>
            <person name="Ferriera S."/>
            <person name="Johnson J."/>
            <person name="Steglich C."/>
            <person name="Church G.M."/>
            <person name="Richardson P."/>
            <person name="Chisholm S.W."/>
        </authorList>
    </citation>
    <scope>NUCLEOTIDE SEQUENCE [LARGE SCALE GENOMIC DNA]</scope>
    <source>
        <strain>MIT 9301</strain>
    </source>
</reference>
<comment type="function">
    <text evidence="1">Required for the formation of a threonylcarbamoyl group on adenosine at position 37 (t(6)A37) in tRNAs that read codons beginning with adenine. Is involved in the transfer of the threonylcarbamoyl moiety of threonylcarbamoyl-AMP (TC-AMP) to the N6 group of A37, together with TsaE and TsaB. TsaD likely plays a direct catalytic role in this reaction.</text>
</comment>
<comment type="catalytic activity">
    <reaction evidence="1">
        <text>L-threonylcarbamoyladenylate + adenosine(37) in tRNA = N(6)-L-threonylcarbamoyladenosine(37) in tRNA + AMP + H(+)</text>
        <dbReference type="Rhea" id="RHEA:37059"/>
        <dbReference type="Rhea" id="RHEA-COMP:10162"/>
        <dbReference type="Rhea" id="RHEA-COMP:10163"/>
        <dbReference type="ChEBI" id="CHEBI:15378"/>
        <dbReference type="ChEBI" id="CHEBI:73682"/>
        <dbReference type="ChEBI" id="CHEBI:74411"/>
        <dbReference type="ChEBI" id="CHEBI:74418"/>
        <dbReference type="ChEBI" id="CHEBI:456215"/>
        <dbReference type="EC" id="2.3.1.234"/>
    </reaction>
</comment>
<comment type="cofactor">
    <cofactor evidence="1">
        <name>Fe(2+)</name>
        <dbReference type="ChEBI" id="CHEBI:29033"/>
    </cofactor>
    <text evidence="1">Binds 1 Fe(2+) ion per subunit.</text>
</comment>
<comment type="subcellular location">
    <subcellularLocation>
        <location evidence="1">Cytoplasm</location>
    </subcellularLocation>
</comment>
<comment type="similarity">
    <text evidence="1">Belongs to the KAE1 / TsaD family.</text>
</comment>
<keyword id="KW-0012">Acyltransferase</keyword>
<keyword id="KW-0963">Cytoplasm</keyword>
<keyword id="KW-0408">Iron</keyword>
<keyword id="KW-0479">Metal-binding</keyword>
<keyword id="KW-1185">Reference proteome</keyword>
<keyword id="KW-0808">Transferase</keyword>
<keyword id="KW-0819">tRNA processing</keyword>
<proteinExistence type="inferred from homology"/>
<accession>A3PBJ3</accession>
<sequence length="356" mass="38775">MHKVLAIETSCDETSVSIVSNIGDTFRIHSNIIASQIEDHSKWGGVVPELAARKHLELLPFVLEKALEQAKIKIEEVDYIASTVAPGLVGCLRVGSITARSLCMLHSKPFLGIHHLEGHLSSILFSENYPKKSFLTLLVSGGHTELIKVDDNRGMQRLGKSFDDAAGEAFDKVGRLLGLGYPGGPAIEKIAKNGDPMKFNLPKCRISDKKGGFLKYDFSFSGLKTAVLRLVERINLAGKTVPIPDIAASFERVVAEVLVERTIKCAEDHRLDNVVVVGGVAANNTLRKMMISEASKKSIKVHLAPLDLCTDNAAMIGAAALFRIKFKDHLSNLKLGVAGRLSIEQANTLYEENPPF</sequence>
<name>TSAD_PROM0</name>
<evidence type="ECO:0000255" key="1">
    <source>
        <dbReference type="HAMAP-Rule" id="MF_01445"/>
    </source>
</evidence>
<protein>
    <recommendedName>
        <fullName evidence="1">tRNA N6-adenosine threonylcarbamoyltransferase</fullName>
        <ecNumber evidence="1">2.3.1.234</ecNumber>
    </recommendedName>
    <alternativeName>
        <fullName evidence="1">N6-L-threonylcarbamoyladenine synthase</fullName>
        <shortName evidence="1">t(6)A synthase</shortName>
    </alternativeName>
    <alternativeName>
        <fullName evidence="1">t(6)A37 threonylcarbamoyladenosine biosynthesis protein TsaD</fullName>
    </alternativeName>
    <alternativeName>
        <fullName evidence="1">tRNA threonylcarbamoyladenosine biosynthesis protein TsaD</fullName>
    </alternativeName>
</protein>
<feature type="chain" id="PRO_0000303479" description="tRNA N6-adenosine threonylcarbamoyltransferase">
    <location>
        <begin position="1"/>
        <end position="356"/>
    </location>
</feature>
<feature type="binding site" evidence="1">
    <location>
        <position position="115"/>
    </location>
    <ligand>
        <name>Fe cation</name>
        <dbReference type="ChEBI" id="CHEBI:24875"/>
    </ligand>
</feature>
<feature type="binding site" evidence="1">
    <location>
        <position position="119"/>
    </location>
    <ligand>
        <name>Fe cation</name>
        <dbReference type="ChEBI" id="CHEBI:24875"/>
    </ligand>
</feature>
<feature type="binding site" evidence="1">
    <location>
        <begin position="138"/>
        <end position="142"/>
    </location>
    <ligand>
        <name>substrate</name>
    </ligand>
</feature>
<feature type="binding site" evidence="1">
    <location>
        <position position="171"/>
    </location>
    <ligand>
        <name>substrate</name>
    </ligand>
</feature>
<feature type="binding site" evidence="1">
    <location>
        <position position="184"/>
    </location>
    <ligand>
        <name>substrate</name>
    </ligand>
</feature>
<feature type="binding site" evidence="1">
    <location>
        <position position="283"/>
    </location>
    <ligand>
        <name>substrate</name>
    </ligand>
</feature>
<feature type="binding site" evidence="1">
    <location>
        <position position="311"/>
    </location>
    <ligand>
        <name>Fe cation</name>
        <dbReference type="ChEBI" id="CHEBI:24875"/>
    </ligand>
</feature>
<dbReference type="EC" id="2.3.1.234" evidence="1"/>
<dbReference type="EMBL" id="CP000576">
    <property type="protein sequence ID" value="ABO17118.1"/>
    <property type="molecule type" value="Genomic_DNA"/>
</dbReference>
<dbReference type="RefSeq" id="WP_011862491.1">
    <property type="nucleotide sequence ID" value="NC_009091.1"/>
</dbReference>
<dbReference type="SMR" id="A3PBJ3"/>
<dbReference type="STRING" id="167546.P9301_04951"/>
<dbReference type="KEGG" id="pmg:P9301_04951"/>
<dbReference type="eggNOG" id="COG0533">
    <property type="taxonomic scope" value="Bacteria"/>
</dbReference>
<dbReference type="HOGENOM" id="CLU_023208_0_2_3"/>
<dbReference type="OrthoDB" id="9806197at2"/>
<dbReference type="Proteomes" id="UP000001430">
    <property type="component" value="Chromosome"/>
</dbReference>
<dbReference type="GO" id="GO:0005737">
    <property type="term" value="C:cytoplasm"/>
    <property type="evidence" value="ECO:0007669"/>
    <property type="project" value="UniProtKB-SubCell"/>
</dbReference>
<dbReference type="GO" id="GO:0005506">
    <property type="term" value="F:iron ion binding"/>
    <property type="evidence" value="ECO:0007669"/>
    <property type="project" value="UniProtKB-UniRule"/>
</dbReference>
<dbReference type="GO" id="GO:0061711">
    <property type="term" value="F:N(6)-L-threonylcarbamoyladenine synthase activity"/>
    <property type="evidence" value="ECO:0007669"/>
    <property type="project" value="UniProtKB-EC"/>
</dbReference>
<dbReference type="GO" id="GO:0002949">
    <property type="term" value="P:tRNA threonylcarbamoyladenosine modification"/>
    <property type="evidence" value="ECO:0007669"/>
    <property type="project" value="UniProtKB-UniRule"/>
</dbReference>
<dbReference type="FunFam" id="3.30.420.40:FF:000012">
    <property type="entry name" value="tRNA N6-adenosine threonylcarbamoyltransferase"/>
    <property type="match status" value="1"/>
</dbReference>
<dbReference type="FunFam" id="3.30.420.40:FF:000040">
    <property type="entry name" value="tRNA N6-adenosine threonylcarbamoyltransferase"/>
    <property type="match status" value="1"/>
</dbReference>
<dbReference type="Gene3D" id="3.30.420.40">
    <property type="match status" value="2"/>
</dbReference>
<dbReference type="HAMAP" id="MF_01445">
    <property type="entry name" value="TsaD"/>
    <property type="match status" value="1"/>
</dbReference>
<dbReference type="InterPro" id="IPR043129">
    <property type="entry name" value="ATPase_NBD"/>
</dbReference>
<dbReference type="InterPro" id="IPR000905">
    <property type="entry name" value="Gcp-like_dom"/>
</dbReference>
<dbReference type="InterPro" id="IPR017861">
    <property type="entry name" value="KAE1/TsaD"/>
</dbReference>
<dbReference type="InterPro" id="IPR022450">
    <property type="entry name" value="TsaD"/>
</dbReference>
<dbReference type="NCBIfam" id="TIGR00329">
    <property type="entry name" value="gcp_kae1"/>
    <property type="match status" value="1"/>
</dbReference>
<dbReference type="NCBIfam" id="TIGR03723">
    <property type="entry name" value="T6A_TsaD_YgjD"/>
    <property type="match status" value="1"/>
</dbReference>
<dbReference type="PANTHER" id="PTHR11735">
    <property type="entry name" value="TRNA N6-ADENOSINE THREONYLCARBAMOYLTRANSFERASE"/>
    <property type="match status" value="1"/>
</dbReference>
<dbReference type="PANTHER" id="PTHR11735:SF6">
    <property type="entry name" value="TRNA N6-ADENOSINE THREONYLCARBAMOYLTRANSFERASE, MITOCHONDRIAL"/>
    <property type="match status" value="1"/>
</dbReference>
<dbReference type="Pfam" id="PF00814">
    <property type="entry name" value="TsaD"/>
    <property type="match status" value="1"/>
</dbReference>
<dbReference type="PRINTS" id="PR00789">
    <property type="entry name" value="OSIALOPTASE"/>
</dbReference>
<dbReference type="SUPFAM" id="SSF53067">
    <property type="entry name" value="Actin-like ATPase domain"/>
    <property type="match status" value="2"/>
</dbReference>
<organism>
    <name type="scientific">Prochlorococcus marinus (strain MIT 9301)</name>
    <dbReference type="NCBI Taxonomy" id="167546"/>
    <lineage>
        <taxon>Bacteria</taxon>
        <taxon>Bacillati</taxon>
        <taxon>Cyanobacteriota</taxon>
        <taxon>Cyanophyceae</taxon>
        <taxon>Synechococcales</taxon>
        <taxon>Prochlorococcaceae</taxon>
        <taxon>Prochlorococcus</taxon>
    </lineage>
</organism>
<gene>
    <name evidence="1" type="primary">tsaD</name>
    <name type="synonym">gcp</name>
    <name type="ordered locus">P9301_04951</name>
</gene>